<name>PURT_CHLPD</name>
<feature type="chain" id="PRO_0000319149" description="Formate-dependent phosphoribosylglycinamide formyltransferase">
    <location>
        <begin position="1"/>
        <end position="389"/>
    </location>
</feature>
<feature type="domain" description="ATP-grasp" evidence="1">
    <location>
        <begin position="109"/>
        <end position="300"/>
    </location>
</feature>
<feature type="binding site" evidence="1">
    <location>
        <begin position="12"/>
        <end position="13"/>
    </location>
    <ligand>
        <name>N(1)-(5-phospho-beta-D-ribosyl)glycinamide</name>
        <dbReference type="ChEBI" id="CHEBI:143788"/>
    </ligand>
</feature>
<feature type="binding site" evidence="1">
    <location>
        <position position="72"/>
    </location>
    <ligand>
        <name>N(1)-(5-phospho-beta-D-ribosyl)glycinamide</name>
        <dbReference type="ChEBI" id="CHEBI:143788"/>
    </ligand>
</feature>
<feature type="binding site" evidence="1">
    <location>
        <position position="104"/>
    </location>
    <ligand>
        <name>ATP</name>
        <dbReference type="ChEBI" id="CHEBI:30616"/>
    </ligand>
</feature>
<feature type="binding site" evidence="1">
    <location>
        <position position="145"/>
    </location>
    <ligand>
        <name>ATP</name>
        <dbReference type="ChEBI" id="CHEBI:30616"/>
    </ligand>
</feature>
<feature type="binding site" evidence="1">
    <location>
        <begin position="150"/>
        <end position="155"/>
    </location>
    <ligand>
        <name>ATP</name>
        <dbReference type="ChEBI" id="CHEBI:30616"/>
    </ligand>
</feature>
<feature type="binding site" evidence="1">
    <location>
        <begin position="185"/>
        <end position="188"/>
    </location>
    <ligand>
        <name>ATP</name>
        <dbReference type="ChEBI" id="CHEBI:30616"/>
    </ligand>
</feature>
<feature type="binding site" evidence="1">
    <location>
        <position position="193"/>
    </location>
    <ligand>
        <name>ATP</name>
        <dbReference type="ChEBI" id="CHEBI:30616"/>
    </ligand>
</feature>
<feature type="binding site" evidence="1">
    <location>
        <position position="258"/>
    </location>
    <ligand>
        <name>Mg(2+)</name>
        <dbReference type="ChEBI" id="CHEBI:18420"/>
    </ligand>
</feature>
<feature type="binding site" evidence="1">
    <location>
        <position position="270"/>
    </location>
    <ligand>
        <name>Mg(2+)</name>
        <dbReference type="ChEBI" id="CHEBI:18420"/>
    </ligand>
</feature>
<feature type="binding site" evidence="1">
    <location>
        <position position="277"/>
    </location>
    <ligand>
        <name>N(1)-(5-phospho-beta-D-ribosyl)glycinamide</name>
        <dbReference type="ChEBI" id="CHEBI:143788"/>
    </ligand>
</feature>
<feature type="binding site" evidence="1">
    <location>
        <position position="348"/>
    </location>
    <ligand>
        <name>N(1)-(5-phospho-beta-D-ribosyl)glycinamide</name>
        <dbReference type="ChEBI" id="CHEBI:143788"/>
    </ligand>
</feature>
<feature type="binding site" evidence="1">
    <location>
        <begin position="355"/>
        <end position="356"/>
    </location>
    <ligand>
        <name>N(1)-(5-phospho-beta-D-ribosyl)glycinamide</name>
        <dbReference type="ChEBI" id="CHEBI:143788"/>
    </ligand>
</feature>
<evidence type="ECO:0000255" key="1">
    <source>
        <dbReference type="HAMAP-Rule" id="MF_01643"/>
    </source>
</evidence>
<dbReference type="EC" id="6.3.1.21" evidence="1"/>
<dbReference type="EMBL" id="CP000492">
    <property type="protein sequence ID" value="ABL65907.1"/>
    <property type="molecule type" value="Genomic_DNA"/>
</dbReference>
<dbReference type="RefSeq" id="WP_011745714.1">
    <property type="nucleotide sequence ID" value="NC_008639.1"/>
</dbReference>
<dbReference type="SMR" id="A1BHN0"/>
<dbReference type="STRING" id="290317.Cpha266_1891"/>
<dbReference type="KEGG" id="cph:Cpha266_1891"/>
<dbReference type="eggNOG" id="COG0027">
    <property type="taxonomic scope" value="Bacteria"/>
</dbReference>
<dbReference type="HOGENOM" id="CLU_011534_1_3_10"/>
<dbReference type="OrthoDB" id="9804625at2"/>
<dbReference type="UniPathway" id="UPA00074">
    <property type="reaction ID" value="UER00127"/>
</dbReference>
<dbReference type="Proteomes" id="UP000008701">
    <property type="component" value="Chromosome"/>
</dbReference>
<dbReference type="GO" id="GO:0005829">
    <property type="term" value="C:cytosol"/>
    <property type="evidence" value="ECO:0007669"/>
    <property type="project" value="TreeGrafter"/>
</dbReference>
<dbReference type="GO" id="GO:0005524">
    <property type="term" value="F:ATP binding"/>
    <property type="evidence" value="ECO:0007669"/>
    <property type="project" value="UniProtKB-UniRule"/>
</dbReference>
<dbReference type="GO" id="GO:0000287">
    <property type="term" value="F:magnesium ion binding"/>
    <property type="evidence" value="ECO:0007669"/>
    <property type="project" value="InterPro"/>
</dbReference>
<dbReference type="GO" id="GO:0043815">
    <property type="term" value="F:phosphoribosylglycinamide formyltransferase 2 activity"/>
    <property type="evidence" value="ECO:0007669"/>
    <property type="project" value="UniProtKB-UniRule"/>
</dbReference>
<dbReference type="GO" id="GO:0004644">
    <property type="term" value="F:phosphoribosylglycinamide formyltransferase activity"/>
    <property type="evidence" value="ECO:0007669"/>
    <property type="project" value="InterPro"/>
</dbReference>
<dbReference type="GO" id="GO:0006189">
    <property type="term" value="P:'de novo' IMP biosynthetic process"/>
    <property type="evidence" value="ECO:0007669"/>
    <property type="project" value="UniProtKB-UniRule"/>
</dbReference>
<dbReference type="FunFam" id="3.30.1490.20:FF:000013">
    <property type="entry name" value="Formate-dependent phosphoribosylglycinamide formyltransferase"/>
    <property type="match status" value="1"/>
</dbReference>
<dbReference type="FunFam" id="3.30.470.20:FF:000035">
    <property type="entry name" value="Formate-dependent phosphoribosylglycinamide formyltransferase"/>
    <property type="match status" value="1"/>
</dbReference>
<dbReference type="FunFam" id="3.40.50.20:FF:000022">
    <property type="entry name" value="Formate-dependent phosphoribosylglycinamide formyltransferase"/>
    <property type="match status" value="1"/>
</dbReference>
<dbReference type="Gene3D" id="3.40.50.20">
    <property type="match status" value="1"/>
</dbReference>
<dbReference type="Gene3D" id="3.30.1490.20">
    <property type="entry name" value="ATP-grasp fold, A domain"/>
    <property type="match status" value="1"/>
</dbReference>
<dbReference type="Gene3D" id="3.30.470.20">
    <property type="entry name" value="ATP-grasp fold, B domain"/>
    <property type="match status" value="1"/>
</dbReference>
<dbReference type="HAMAP" id="MF_01643">
    <property type="entry name" value="PurT"/>
    <property type="match status" value="1"/>
</dbReference>
<dbReference type="InterPro" id="IPR011761">
    <property type="entry name" value="ATP-grasp"/>
</dbReference>
<dbReference type="InterPro" id="IPR003135">
    <property type="entry name" value="ATP-grasp_carboxylate-amine"/>
</dbReference>
<dbReference type="InterPro" id="IPR013815">
    <property type="entry name" value="ATP_grasp_subdomain_1"/>
</dbReference>
<dbReference type="InterPro" id="IPR016185">
    <property type="entry name" value="PreATP-grasp_dom_sf"/>
</dbReference>
<dbReference type="InterPro" id="IPR005862">
    <property type="entry name" value="PurT"/>
</dbReference>
<dbReference type="InterPro" id="IPR054350">
    <property type="entry name" value="PurT/PurK_preATP-grasp"/>
</dbReference>
<dbReference type="InterPro" id="IPR048740">
    <property type="entry name" value="PurT_C"/>
</dbReference>
<dbReference type="InterPro" id="IPR011054">
    <property type="entry name" value="Rudment_hybrid_motif"/>
</dbReference>
<dbReference type="NCBIfam" id="NF006766">
    <property type="entry name" value="PRK09288.1"/>
    <property type="match status" value="1"/>
</dbReference>
<dbReference type="NCBIfam" id="TIGR01142">
    <property type="entry name" value="purT"/>
    <property type="match status" value="1"/>
</dbReference>
<dbReference type="PANTHER" id="PTHR43055">
    <property type="entry name" value="FORMATE-DEPENDENT PHOSPHORIBOSYLGLYCINAMIDE FORMYLTRANSFERASE"/>
    <property type="match status" value="1"/>
</dbReference>
<dbReference type="PANTHER" id="PTHR43055:SF1">
    <property type="entry name" value="FORMATE-DEPENDENT PHOSPHORIBOSYLGLYCINAMIDE FORMYLTRANSFERASE"/>
    <property type="match status" value="1"/>
</dbReference>
<dbReference type="Pfam" id="PF02222">
    <property type="entry name" value="ATP-grasp"/>
    <property type="match status" value="1"/>
</dbReference>
<dbReference type="Pfam" id="PF21244">
    <property type="entry name" value="PurT_C"/>
    <property type="match status" value="1"/>
</dbReference>
<dbReference type="Pfam" id="PF22660">
    <property type="entry name" value="RS_preATP-grasp-like"/>
    <property type="match status" value="1"/>
</dbReference>
<dbReference type="SUPFAM" id="SSF56059">
    <property type="entry name" value="Glutathione synthetase ATP-binding domain-like"/>
    <property type="match status" value="1"/>
</dbReference>
<dbReference type="SUPFAM" id="SSF52440">
    <property type="entry name" value="PreATP-grasp domain"/>
    <property type="match status" value="1"/>
</dbReference>
<dbReference type="SUPFAM" id="SSF51246">
    <property type="entry name" value="Rudiment single hybrid motif"/>
    <property type="match status" value="1"/>
</dbReference>
<dbReference type="PROSITE" id="PS50975">
    <property type="entry name" value="ATP_GRASP"/>
    <property type="match status" value="1"/>
</dbReference>
<proteinExistence type="inferred from homology"/>
<sequence>MQKKIMLLGSGELGKEFVIAVKRLGHFVIAVDSYNDAPAQQVADRREVINMLDGAALDAIVARHQPDVIVPEIEAIRTERFYDYEKEGIQVVPSARAANFTMNRKAIRDLASKELGLRTATYRYAASKEELKRAIGEVGVPCVVKPLMSSSGKGQSTVKTEADIEHAWSYSQSGRRGDSVEVIVEAFVPFHTEITLLTVTQKNGPTLFCPPIGHRQERGDYQESWQPCRIGDAQLHEAQEIAEKVTRSLTGAGIWGVEFFLADDGLYFSELSPRPHDTGMVTLAGTQNFTEFELHARAVLGLPIPKIELLRVGASAVVSADREGKNPDYSGLEEALGEPCTDIRIFGKPATRPYRRMGVTLAYDEPGSDVDTVKAKAIANARKVRVTSE</sequence>
<organism>
    <name type="scientific">Chlorobium phaeobacteroides (strain DSM 266 / SMG 266 / 2430)</name>
    <dbReference type="NCBI Taxonomy" id="290317"/>
    <lineage>
        <taxon>Bacteria</taxon>
        <taxon>Pseudomonadati</taxon>
        <taxon>Chlorobiota</taxon>
        <taxon>Chlorobiia</taxon>
        <taxon>Chlorobiales</taxon>
        <taxon>Chlorobiaceae</taxon>
        <taxon>Chlorobium/Pelodictyon group</taxon>
        <taxon>Chlorobium</taxon>
    </lineage>
</organism>
<comment type="function">
    <text evidence="1">Involved in the de novo purine biosynthesis. Catalyzes the transfer of formate to 5-phospho-ribosyl-glycinamide (GAR), producing 5-phospho-ribosyl-N-formylglycinamide (FGAR). Formate is provided by PurU via hydrolysis of 10-formyl-tetrahydrofolate.</text>
</comment>
<comment type="catalytic activity">
    <reaction evidence="1">
        <text>N(1)-(5-phospho-beta-D-ribosyl)glycinamide + formate + ATP = N(2)-formyl-N(1)-(5-phospho-beta-D-ribosyl)glycinamide + ADP + phosphate + H(+)</text>
        <dbReference type="Rhea" id="RHEA:24829"/>
        <dbReference type="ChEBI" id="CHEBI:15378"/>
        <dbReference type="ChEBI" id="CHEBI:15740"/>
        <dbReference type="ChEBI" id="CHEBI:30616"/>
        <dbReference type="ChEBI" id="CHEBI:43474"/>
        <dbReference type="ChEBI" id="CHEBI:143788"/>
        <dbReference type="ChEBI" id="CHEBI:147286"/>
        <dbReference type="ChEBI" id="CHEBI:456216"/>
        <dbReference type="EC" id="6.3.1.21"/>
    </reaction>
    <physiologicalReaction direction="left-to-right" evidence="1">
        <dbReference type="Rhea" id="RHEA:24830"/>
    </physiologicalReaction>
</comment>
<comment type="pathway">
    <text evidence="1">Purine metabolism; IMP biosynthesis via de novo pathway; N(2)-formyl-N(1)-(5-phospho-D-ribosyl)glycinamide from N(1)-(5-phospho-D-ribosyl)glycinamide (formate route): step 1/1.</text>
</comment>
<comment type="subunit">
    <text evidence="1">Homodimer.</text>
</comment>
<comment type="similarity">
    <text evidence="1">Belongs to the PurK/PurT family.</text>
</comment>
<reference key="1">
    <citation type="submission" date="2006-12" db="EMBL/GenBank/DDBJ databases">
        <title>Complete sequence of Chlorobium phaeobacteroides DSM 266.</title>
        <authorList>
            <consortium name="US DOE Joint Genome Institute"/>
            <person name="Copeland A."/>
            <person name="Lucas S."/>
            <person name="Lapidus A."/>
            <person name="Barry K."/>
            <person name="Detter J.C."/>
            <person name="Glavina del Rio T."/>
            <person name="Hammon N."/>
            <person name="Israni S."/>
            <person name="Pitluck S."/>
            <person name="Goltsman E."/>
            <person name="Schmutz J."/>
            <person name="Larimer F."/>
            <person name="Land M."/>
            <person name="Hauser L."/>
            <person name="Mikhailova N."/>
            <person name="Li T."/>
            <person name="Overmann J."/>
            <person name="Bryant D.A."/>
            <person name="Richardson P."/>
        </authorList>
    </citation>
    <scope>NUCLEOTIDE SEQUENCE [LARGE SCALE GENOMIC DNA]</scope>
    <source>
        <strain>DSM 266 / SMG 266 / 2430</strain>
    </source>
</reference>
<protein>
    <recommendedName>
        <fullName evidence="1">Formate-dependent phosphoribosylglycinamide formyltransferase</fullName>
        <ecNumber evidence="1">6.3.1.21</ecNumber>
    </recommendedName>
    <alternativeName>
        <fullName evidence="1">5'-phosphoribosylglycinamide transformylase 2</fullName>
    </alternativeName>
    <alternativeName>
        <fullName evidence="1">Formate-dependent GAR transformylase</fullName>
    </alternativeName>
    <alternativeName>
        <fullName evidence="1">GAR transformylase 2</fullName>
        <shortName evidence="1">GART 2</shortName>
    </alternativeName>
    <alternativeName>
        <fullName evidence="1">Non-folate glycinamide ribonucleotide transformylase</fullName>
    </alternativeName>
    <alternativeName>
        <fullName evidence="1">Phosphoribosylglycinamide formyltransferase 2</fullName>
    </alternativeName>
</protein>
<accession>A1BHN0</accession>
<gene>
    <name evidence="1" type="primary">purT</name>
    <name type="ordered locus">Cpha266_1891</name>
</gene>
<keyword id="KW-0067">ATP-binding</keyword>
<keyword id="KW-0436">Ligase</keyword>
<keyword id="KW-0460">Magnesium</keyword>
<keyword id="KW-0479">Metal-binding</keyword>
<keyword id="KW-0547">Nucleotide-binding</keyword>
<keyword id="KW-0658">Purine biosynthesis</keyword>
<keyword id="KW-1185">Reference proteome</keyword>